<protein>
    <recommendedName>
        <fullName evidence="1">tRNA-2-methylthio-N(6)-dimethylallyladenosine synthase</fullName>
        <ecNumber evidence="1">2.8.4.3</ecNumber>
    </recommendedName>
    <alternativeName>
        <fullName evidence="1">(Dimethylallyl)adenosine tRNA methylthiotransferase MiaB</fullName>
    </alternativeName>
    <alternativeName>
        <fullName evidence="1">tRNA-i(6)A37 methylthiotransferase</fullName>
    </alternativeName>
</protein>
<name>MIAB_HELP2</name>
<comment type="function">
    <text evidence="1">Catalyzes the methylthiolation of N6-(dimethylallyl)adenosine (i(6)A), leading to the formation of 2-methylthio-N6-(dimethylallyl)adenosine (ms(2)i(6)A) at position 37 in tRNAs that read codons beginning with uridine.</text>
</comment>
<comment type="catalytic activity">
    <reaction evidence="1">
        <text>N(6)-dimethylallyladenosine(37) in tRNA + (sulfur carrier)-SH + AH2 + 2 S-adenosyl-L-methionine = 2-methylsulfanyl-N(6)-dimethylallyladenosine(37) in tRNA + (sulfur carrier)-H + 5'-deoxyadenosine + L-methionine + A + S-adenosyl-L-homocysteine + 2 H(+)</text>
        <dbReference type="Rhea" id="RHEA:37067"/>
        <dbReference type="Rhea" id="RHEA-COMP:10375"/>
        <dbReference type="Rhea" id="RHEA-COMP:10376"/>
        <dbReference type="Rhea" id="RHEA-COMP:14737"/>
        <dbReference type="Rhea" id="RHEA-COMP:14739"/>
        <dbReference type="ChEBI" id="CHEBI:13193"/>
        <dbReference type="ChEBI" id="CHEBI:15378"/>
        <dbReference type="ChEBI" id="CHEBI:17319"/>
        <dbReference type="ChEBI" id="CHEBI:17499"/>
        <dbReference type="ChEBI" id="CHEBI:29917"/>
        <dbReference type="ChEBI" id="CHEBI:57844"/>
        <dbReference type="ChEBI" id="CHEBI:57856"/>
        <dbReference type="ChEBI" id="CHEBI:59789"/>
        <dbReference type="ChEBI" id="CHEBI:64428"/>
        <dbReference type="ChEBI" id="CHEBI:74415"/>
        <dbReference type="ChEBI" id="CHEBI:74417"/>
        <dbReference type="EC" id="2.8.4.3"/>
    </reaction>
</comment>
<comment type="cofactor">
    <cofactor evidence="1">
        <name>[4Fe-4S] cluster</name>
        <dbReference type="ChEBI" id="CHEBI:49883"/>
    </cofactor>
    <text evidence="1">Binds 2 [4Fe-4S] clusters. One cluster is coordinated with 3 cysteines and an exchangeable S-adenosyl-L-methionine.</text>
</comment>
<comment type="subunit">
    <text evidence="1">Monomer.</text>
</comment>
<comment type="subcellular location">
    <subcellularLocation>
        <location evidence="1">Cytoplasm</location>
    </subcellularLocation>
</comment>
<comment type="similarity">
    <text evidence="1">Belongs to the methylthiotransferase family. MiaB subfamily.</text>
</comment>
<proteinExistence type="inferred from homology"/>
<accession>B6JKJ8</accession>
<keyword id="KW-0004">4Fe-4S</keyword>
<keyword id="KW-0963">Cytoplasm</keyword>
<keyword id="KW-0408">Iron</keyword>
<keyword id="KW-0411">Iron-sulfur</keyword>
<keyword id="KW-0479">Metal-binding</keyword>
<keyword id="KW-0949">S-adenosyl-L-methionine</keyword>
<keyword id="KW-0808">Transferase</keyword>
<keyword id="KW-0819">tRNA processing</keyword>
<reference key="1">
    <citation type="submission" date="2008-10" db="EMBL/GenBank/DDBJ databases">
        <title>The complete genome sequence of Helicobacter pylori strain P12.</title>
        <authorList>
            <person name="Fischer W."/>
            <person name="Windhager L."/>
            <person name="Karnholz A."/>
            <person name="Zeiller M."/>
            <person name="Zimmer R."/>
            <person name="Haas R."/>
        </authorList>
    </citation>
    <scope>NUCLEOTIDE SEQUENCE [LARGE SCALE GENOMIC DNA]</scope>
    <source>
        <strain>P12</strain>
    </source>
</reference>
<feature type="chain" id="PRO_0000374339" description="tRNA-2-methylthio-N(6)-dimethylallyladenosine synthase">
    <location>
        <begin position="1"/>
        <end position="437"/>
    </location>
</feature>
<feature type="domain" description="MTTase N-terminal" evidence="1">
    <location>
        <begin position="1"/>
        <end position="115"/>
    </location>
</feature>
<feature type="domain" description="Radical SAM core" evidence="2">
    <location>
        <begin position="134"/>
        <end position="367"/>
    </location>
</feature>
<feature type="domain" description="TRAM" evidence="1">
    <location>
        <begin position="370"/>
        <end position="436"/>
    </location>
</feature>
<feature type="binding site" evidence="1">
    <location>
        <position position="10"/>
    </location>
    <ligand>
        <name>[4Fe-4S] cluster</name>
        <dbReference type="ChEBI" id="CHEBI:49883"/>
        <label>1</label>
    </ligand>
</feature>
<feature type="binding site" evidence="1">
    <location>
        <position position="46"/>
    </location>
    <ligand>
        <name>[4Fe-4S] cluster</name>
        <dbReference type="ChEBI" id="CHEBI:49883"/>
        <label>1</label>
    </ligand>
</feature>
<feature type="binding site" evidence="1">
    <location>
        <position position="78"/>
    </location>
    <ligand>
        <name>[4Fe-4S] cluster</name>
        <dbReference type="ChEBI" id="CHEBI:49883"/>
        <label>1</label>
    </ligand>
</feature>
<feature type="binding site" evidence="1">
    <location>
        <position position="148"/>
    </location>
    <ligand>
        <name>[4Fe-4S] cluster</name>
        <dbReference type="ChEBI" id="CHEBI:49883"/>
        <label>2</label>
        <note>4Fe-4S-S-AdoMet</note>
    </ligand>
</feature>
<feature type="binding site" evidence="1">
    <location>
        <position position="152"/>
    </location>
    <ligand>
        <name>[4Fe-4S] cluster</name>
        <dbReference type="ChEBI" id="CHEBI:49883"/>
        <label>2</label>
        <note>4Fe-4S-S-AdoMet</note>
    </ligand>
</feature>
<feature type="binding site" evidence="1">
    <location>
        <position position="155"/>
    </location>
    <ligand>
        <name>[4Fe-4S] cluster</name>
        <dbReference type="ChEBI" id="CHEBI:49883"/>
        <label>2</label>
        <note>4Fe-4S-S-AdoMet</note>
    </ligand>
</feature>
<evidence type="ECO:0000255" key="1">
    <source>
        <dbReference type="HAMAP-Rule" id="MF_01864"/>
    </source>
</evidence>
<evidence type="ECO:0000255" key="2">
    <source>
        <dbReference type="PROSITE-ProRule" id="PRU01266"/>
    </source>
</evidence>
<sequence length="437" mass="49417">MKVYIETMGCAMNSRDSEHLLSELSKLDYKETSDPKMADLILINTCSVREKPERKLFSEIGQFAKIKKPNAKIGVCGCTASHMGADILKKAPSVSFVLGARNVSKISQVIHKEKAVEVAIDYDESAYAFEFFEKKAQIRSLLNISIGCDKKCAYCIVPHTRGKEISIPMDLILKEAEKLANNGTKELMLLGQNVNNYGVRFSSEHAKVDFSDLLDKLSEIPGIERIRFTSPHPLHMNDGFLERFAKNPKVCKSIHMPLQSGSSAVLKMMRRGYSKEWFLNRVERLKALVPEVGISTDIIVGFPNESDKDFEDTMEVLEKVRFDTLYSFIYSPRPFTEAGAWKERVPLEVSSSRLERLQNRHKEILEEKAKLEVGKTHVVLVENRREMDNQIVGFEGRSDTGKFIEVTCKEKRNPGELVKVEIISHSKGRLIAAIKGN</sequence>
<organism>
    <name type="scientific">Helicobacter pylori (strain P12)</name>
    <dbReference type="NCBI Taxonomy" id="570508"/>
    <lineage>
        <taxon>Bacteria</taxon>
        <taxon>Pseudomonadati</taxon>
        <taxon>Campylobacterota</taxon>
        <taxon>Epsilonproteobacteria</taxon>
        <taxon>Campylobacterales</taxon>
        <taxon>Helicobacteraceae</taxon>
        <taxon>Helicobacter</taxon>
    </lineage>
</organism>
<gene>
    <name evidence="1" type="primary">miaB</name>
    <name type="ordered locus">HPP12_0268</name>
</gene>
<dbReference type="EC" id="2.8.4.3" evidence="1"/>
<dbReference type="EMBL" id="CP001217">
    <property type="protein sequence ID" value="ACJ07426.1"/>
    <property type="molecule type" value="Genomic_DNA"/>
</dbReference>
<dbReference type="SMR" id="B6JKJ8"/>
<dbReference type="KEGG" id="hpp:HPP12_0268"/>
<dbReference type="HOGENOM" id="CLU_018697_2_0_7"/>
<dbReference type="Proteomes" id="UP000008198">
    <property type="component" value="Chromosome"/>
</dbReference>
<dbReference type="GO" id="GO:0005829">
    <property type="term" value="C:cytosol"/>
    <property type="evidence" value="ECO:0007669"/>
    <property type="project" value="TreeGrafter"/>
</dbReference>
<dbReference type="GO" id="GO:0051539">
    <property type="term" value="F:4 iron, 4 sulfur cluster binding"/>
    <property type="evidence" value="ECO:0007669"/>
    <property type="project" value="UniProtKB-UniRule"/>
</dbReference>
<dbReference type="GO" id="GO:0046872">
    <property type="term" value="F:metal ion binding"/>
    <property type="evidence" value="ECO:0007669"/>
    <property type="project" value="UniProtKB-KW"/>
</dbReference>
<dbReference type="GO" id="GO:0035597">
    <property type="term" value="F:N6-isopentenyladenosine methylthiotransferase activity"/>
    <property type="evidence" value="ECO:0007669"/>
    <property type="project" value="TreeGrafter"/>
</dbReference>
<dbReference type="CDD" id="cd01335">
    <property type="entry name" value="Radical_SAM"/>
    <property type="match status" value="1"/>
</dbReference>
<dbReference type="FunFam" id="3.40.50.12160:FF:000003">
    <property type="entry name" value="CDK5 regulatory subunit-associated protein 1"/>
    <property type="match status" value="1"/>
</dbReference>
<dbReference type="FunFam" id="3.80.30.20:FF:000013">
    <property type="entry name" value="tRNA-2-methylthio-N(6)-dimethylallyladenosine synthase"/>
    <property type="match status" value="1"/>
</dbReference>
<dbReference type="Gene3D" id="3.40.50.12160">
    <property type="entry name" value="Methylthiotransferase, N-terminal domain"/>
    <property type="match status" value="1"/>
</dbReference>
<dbReference type="Gene3D" id="3.80.30.20">
    <property type="entry name" value="tm_1862 like domain"/>
    <property type="match status" value="1"/>
</dbReference>
<dbReference type="HAMAP" id="MF_01864">
    <property type="entry name" value="tRNA_metthiotr_MiaB"/>
    <property type="match status" value="1"/>
</dbReference>
<dbReference type="InterPro" id="IPR006638">
    <property type="entry name" value="Elp3/MiaA/NifB-like_rSAM"/>
</dbReference>
<dbReference type="InterPro" id="IPR005839">
    <property type="entry name" value="Methylthiotransferase"/>
</dbReference>
<dbReference type="InterPro" id="IPR020612">
    <property type="entry name" value="Methylthiotransferase_CS"/>
</dbReference>
<dbReference type="InterPro" id="IPR013848">
    <property type="entry name" value="Methylthiotransferase_N"/>
</dbReference>
<dbReference type="InterPro" id="IPR038135">
    <property type="entry name" value="Methylthiotransferase_N_sf"/>
</dbReference>
<dbReference type="InterPro" id="IPR006463">
    <property type="entry name" value="MiaB_methiolase"/>
</dbReference>
<dbReference type="InterPro" id="IPR007197">
    <property type="entry name" value="rSAM"/>
</dbReference>
<dbReference type="InterPro" id="IPR023404">
    <property type="entry name" value="rSAM_horseshoe"/>
</dbReference>
<dbReference type="InterPro" id="IPR002792">
    <property type="entry name" value="TRAM_dom"/>
</dbReference>
<dbReference type="NCBIfam" id="TIGR01574">
    <property type="entry name" value="miaB-methiolase"/>
    <property type="match status" value="1"/>
</dbReference>
<dbReference type="NCBIfam" id="TIGR00089">
    <property type="entry name" value="MiaB/RimO family radical SAM methylthiotransferase"/>
    <property type="match status" value="1"/>
</dbReference>
<dbReference type="PANTHER" id="PTHR43020">
    <property type="entry name" value="CDK5 REGULATORY SUBUNIT-ASSOCIATED PROTEIN 1"/>
    <property type="match status" value="1"/>
</dbReference>
<dbReference type="PANTHER" id="PTHR43020:SF2">
    <property type="entry name" value="MITOCHONDRIAL TRNA METHYLTHIOTRANSFERASE CDK5RAP1"/>
    <property type="match status" value="1"/>
</dbReference>
<dbReference type="Pfam" id="PF04055">
    <property type="entry name" value="Radical_SAM"/>
    <property type="match status" value="1"/>
</dbReference>
<dbReference type="Pfam" id="PF00919">
    <property type="entry name" value="UPF0004"/>
    <property type="match status" value="1"/>
</dbReference>
<dbReference type="SFLD" id="SFLDF00273">
    <property type="entry name" value="(dimethylallyl)adenosine_tRNA"/>
    <property type="match status" value="1"/>
</dbReference>
<dbReference type="SFLD" id="SFLDG01082">
    <property type="entry name" value="B12-binding_domain_containing"/>
    <property type="match status" value="1"/>
</dbReference>
<dbReference type="SFLD" id="SFLDG01061">
    <property type="entry name" value="methylthiotransferase"/>
    <property type="match status" value="1"/>
</dbReference>
<dbReference type="SMART" id="SM00729">
    <property type="entry name" value="Elp3"/>
    <property type="match status" value="1"/>
</dbReference>
<dbReference type="SUPFAM" id="SSF102114">
    <property type="entry name" value="Radical SAM enzymes"/>
    <property type="match status" value="1"/>
</dbReference>
<dbReference type="PROSITE" id="PS51449">
    <property type="entry name" value="MTTASE_N"/>
    <property type="match status" value="1"/>
</dbReference>
<dbReference type="PROSITE" id="PS01278">
    <property type="entry name" value="MTTASE_RADICAL"/>
    <property type="match status" value="1"/>
</dbReference>
<dbReference type="PROSITE" id="PS51918">
    <property type="entry name" value="RADICAL_SAM"/>
    <property type="match status" value="1"/>
</dbReference>
<dbReference type="PROSITE" id="PS50926">
    <property type="entry name" value="TRAM"/>
    <property type="match status" value="1"/>
</dbReference>